<accession>P55190</accession>
<accession>O31419</accession>
<accession>P55191</accession>
<gene>
    <name type="primary">ybaS</name>
    <name type="ordered locus">BSU01590</name>
</gene>
<sequence>MPLLTPTSVVLGVLLSQFLNGYEWAVPWIFAFITFAGSLSANFQSLRHALSHPLPMILALFVLHIFMPLFAWGSGHLIFKGDPLTITGLTLAVVIPTGITSLIWAAMYKGNVGLTLSIILVDTVLSPLIVPLSLSLLAGAQVHMDVWGMMKGLIVMVVIPSFLGMLFNQMSSPERTAFVSSALSPFSKLCLMAVIAINSSAIAPYFKSIDLRFAGIAVTVFFIALTGYAAAWLIGKMMKRRQEEIVSLIFTGGMRNISAGAVLAVTFFPSQVAVPVVIGMLFQQILAALFGYMLNRFELKPMLQKA</sequence>
<evidence type="ECO:0000255" key="1"/>
<evidence type="ECO:0000305" key="2"/>
<name>YBAS_BACSU</name>
<protein>
    <recommendedName>
        <fullName>Uncharacterized protein YbaS</fullName>
    </recommendedName>
</protein>
<dbReference type="EMBL" id="D84213">
    <property type="protein sequence ID" value="BAA12259.1"/>
    <property type="status" value="ALT_FRAME"/>
    <property type="molecule type" value="Genomic_DNA"/>
</dbReference>
<dbReference type="EMBL" id="D84213">
    <property type="protein sequence ID" value="BAA12260.1"/>
    <property type="status" value="ALT_FRAME"/>
    <property type="molecule type" value="Genomic_DNA"/>
</dbReference>
<dbReference type="EMBL" id="AL009126">
    <property type="protein sequence ID" value="CAB11935.2"/>
    <property type="molecule type" value="Genomic_DNA"/>
</dbReference>
<dbReference type="PIR" id="D69743">
    <property type="entry name" value="D69743"/>
</dbReference>
<dbReference type="RefSeq" id="NP_388040.2">
    <property type="nucleotide sequence ID" value="NC_000964.3"/>
</dbReference>
<dbReference type="RefSeq" id="WP_010886390.1">
    <property type="nucleotide sequence ID" value="NZ_OZ025638.1"/>
</dbReference>
<dbReference type="SMR" id="P55190"/>
<dbReference type="FunCoup" id="P55190">
    <property type="interactions" value="56"/>
</dbReference>
<dbReference type="STRING" id="224308.BSU01590"/>
<dbReference type="PaxDb" id="224308-BSU01590"/>
<dbReference type="EnsemblBacteria" id="CAB11935">
    <property type="protein sequence ID" value="CAB11935"/>
    <property type="gene ID" value="BSU_01590"/>
</dbReference>
<dbReference type="GeneID" id="938892"/>
<dbReference type="KEGG" id="bsu:BSU01590"/>
<dbReference type="PATRIC" id="fig|224308.43.peg.164"/>
<dbReference type="eggNOG" id="COG0385">
    <property type="taxonomic scope" value="Bacteria"/>
</dbReference>
<dbReference type="InParanoid" id="P55190"/>
<dbReference type="OrthoDB" id="1551454at2"/>
<dbReference type="PhylomeDB" id="P55190"/>
<dbReference type="BioCyc" id="BSUB:BSU01590-MONOMER"/>
<dbReference type="Proteomes" id="UP000001570">
    <property type="component" value="Chromosome"/>
</dbReference>
<dbReference type="GO" id="GO:0005886">
    <property type="term" value="C:plasma membrane"/>
    <property type="evidence" value="ECO:0007669"/>
    <property type="project" value="UniProtKB-SubCell"/>
</dbReference>
<dbReference type="Gene3D" id="1.20.1530.20">
    <property type="match status" value="1"/>
</dbReference>
<dbReference type="InterPro" id="IPR002657">
    <property type="entry name" value="BilAc:Na_symport/Acr3"/>
</dbReference>
<dbReference type="InterPro" id="IPR004710">
    <property type="entry name" value="Bilac:Na_transpt"/>
</dbReference>
<dbReference type="InterPro" id="IPR038770">
    <property type="entry name" value="Na+/solute_symporter_sf"/>
</dbReference>
<dbReference type="PANTHER" id="PTHR10361:SF28">
    <property type="entry name" value="P3 PROTEIN-RELATED"/>
    <property type="match status" value="1"/>
</dbReference>
<dbReference type="PANTHER" id="PTHR10361">
    <property type="entry name" value="SODIUM-BILE ACID COTRANSPORTER"/>
    <property type="match status" value="1"/>
</dbReference>
<dbReference type="Pfam" id="PF01758">
    <property type="entry name" value="SBF"/>
    <property type="match status" value="1"/>
</dbReference>
<feature type="chain" id="PRO_0000049454" description="Uncharacterized protein YbaS">
    <location>
        <begin position="1"/>
        <end position="306"/>
    </location>
</feature>
<feature type="transmembrane region" description="Helical" evidence="1">
    <location>
        <begin position="13"/>
        <end position="33"/>
    </location>
</feature>
<feature type="transmembrane region" description="Helical" evidence="1">
    <location>
        <begin position="53"/>
        <end position="73"/>
    </location>
</feature>
<feature type="transmembrane region" description="Helical" evidence="1">
    <location>
        <begin position="86"/>
        <end position="106"/>
    </location>
</feature>
<feature type="transmembrane region" description="Helical" evidence="1">
    <location>
        <begin position="112"/>
        <end position="132"/>
    </location>
</feature>
<feature type="transmembrane region" description="Helical" evidence="1">
    <location>
        <begin position="147"/>
        <end position="167"/>
    </location>
</feature>
<feature type="transmembrane region" description="Helical" evidence="1">
    <location>
        <begin position="177"/>
        <end position="197"/>
    </location>
</feature>
<feature type="transmembrane region" description="Helical" evidence="1">
    <location>
        <begin position="214"/>
        <end position="234"/>
    </location>
</feature>
<feature type="transmembrane region" description="Helical" evidence="1">
    <location>
        <begin position="246"/>
        <end position="268"/>
    </location>
</feature>
<feature type="transmembrane region" description="Helical" evidence="1">
    <location>
        <begin position="272"/>
        <end position="294"/>
    </location>
</feature>
<comment type="subcellular location">
    <subcellularLocation>
        <location evidence="2">Cell membrane</location>
        <topology evidence="2">Multi-pass membrane protein</topology>
    </subcellularLocation>
</comment>
<comment type="sequence caution" evidence="2">
    <conflict type="frameshift">
        <sequence resource="EMBL-CDS" id="BAA12259"/>
    </conflict>
</comment>
<comment type="sequence caution" evidence="2">
    <conflict type="frameshift">
        <sequence resource="EMBL-CDS" id="BAA12260"/>
    </conflict>
</comment>
<proteinExistence type="predicted"/>
<reference key="1">
    <citation type="journal article" date="1997" name="Microbiology">
        <title>Sequence and analysis of a 31 kb segment of the Bacillus subtilis chromosome in the area of the rrnH and rrnG operons.</title>
        <authorList>
            <person name="Liu H."/>
            <person name="Haga K."/>
            <person name="Yasumoto K."/>
            <person name="Ohashi Y."/>
            <person name="Yoshikawa H."/>
            <person name="Takahashi H."/>
        </authorList>
    </citation>
    <scope>NUCLEOTIDE SEQUENCE [GENOMIC DNA]</scope>
    <source>
        <strain>168</strain>
    </source>
</reference>
<reference key="2">
    <citation type="journal article" date="1997" name="Nature">
        <title>The complete genome sequence of the Gram-positive bacterium Bacillus subtilis.</title>
        <authorList>
            <person name="Kunst F."/>
            <person name="Ogasawara N."/>
            <person name="Moszer I."/>
            <person name="Albertini A.M."/>
            <person name="Alloni G."/>
            <person name="Azevedo V."/>
            <person name="Bertero M.G."/>
            <person name="Bessieres P."/>
            <person name="Bolotin A."/>
            <person name="Borchert S."/>
            <person name="Borriss R."/>
            <person name="Boursier L."/>
            <person name="Brans A."/>
            <person name="Braun M."/>
            <person name="Brignell S.C."/>
            <person name="Bron S."/>
            <person name="Brouillet S."/>
            <person name="Bruschi C.V."/>
            <person name="Caldwell B."/>
            <person name="Capuano V."/>
            <person name="Carter N.M."/>
            <person name="Choi S.-K."/>
            <person name="Codani J.-J."/>
            <person name="Connerton I.F."/>
            <person name="Cummings N.J."/>
            <person name="Daniel R.A."/>
            <person name="Denizot F."/>
            <person name="Devine K.M."/>
            <person name="Duesterhoeft A."/>
            <person name="Ehrlich S.D."/>
            <person name="Emmerson P.T."/>
            <person name="Entian K.-D."/>
            <person name="Errington J."/>
            <person name="Fabret C."/>
            <person name="Ferrari E."/>
            <person name="Foulger D."/>
            <person name="Fritz C."/>
            <person name="Fujita M."/>
            <person name="Fujita Y."/>
            <person name="Fuma S."/>
            <person name="Galizzi A."/>
            <person name="Galleron N."/>
            <person name="Ghim S.-Y."/>
            <person name="Glaser P."/>
            <person name="Goffeau A."/>
            <person name="Golightly E.J."/>
            <person name="Grandi G."/>
            <person name="Guiseppi G."/>
            <person name="Guy B.J."/>
            <person name="Haga K."/>
            <person name="Haiech J."/>
            <person name="Harwood C.R."/>
            <person name="Henaut A."/>
            <person name="Hilbert H."/>
            <person name="Holsappel S."/>
            <person name="Hosono S."/>
            <person name="Hullo M.-F."/>
            <person name="Itaya M."/>
            <person name="Jones L.-M."/>
            <person name="Joris B."/>
            <person name="Karamata D."/>
            <person name="Kasahara Y."/>
            <person name="Klaerr-Blanchard M."/>
            <person name="Klein C."/>
            <person name="Kobayashi Y."/>
            <person name="Koetter P."/>
            <person name="Koningstein G."/>
            <person name="Krogh S."/>
            <person name="Kumano M."/>
            <person name="Kurita K."/>
            <person name="Lapidus A."/>
            <person name="Lardinois S."/>
            <person name="Lauber J."/>
            <person name="Lazarevic V."/>
            <person name="Lee S.-M."/>
            <person name="Levine A."/>
            <person name="Liu H."/>
            <person name="Masuda S."/>
            <person name="Mauel C."/>
            <person name="Medigue C."/>
            <person name="Medina N."/>
            <person name="Mellado R.P."/>
            <person name="Mizuno M."/>
            <person name="Moestl D."/>
            <person name="Nakai S."/>
            <person name="Noback M."/>
            <person name="Noone D."/>
            <person name="O'Reilly M."/>
            <person name="Ogawa K."/>
            <person name="Ogiwara A."/>
            <person name="Oudega B."/>
            <person name="Park S.-H."/>
            <person name="Parro V."/>
            <person name="Pohl T.M."/>
            <person name="Portetelle D."/>
            <person name="Porwollik S."/>
            <person name="Prescott A.M."/>
            <person name="Presecan E."/>
            <person name="Pujic P."/>
            <person name="Purnelle B."/>
            <person name="Rapoport G."/>
            <person name="Rey M."/>
            <person name="Reynolds S."/>
            <person name="Rieger M."/>
            <person name="Rivolta C."/>
            <person name="Rocha E."/>
            <person name="Roche B."/>
            <person name="Rose M."/>
            <person name="Sadaie Y."/>
            <person name="Sato T."/>
            <person name="Scanlan E."/>
            <person name="Schleich S."/>
            <person name="Schroeter R."/>
            <person name="Scoffone F."/>
            <person name="Sekiguchi J."/>
            <person name="Sekowska A."/>
            <person name="Seror S.J."/>
            <person name="Serror P."/>
            <person name="Shin B.-S."/>
            <person name="Soldo B."/>
            <person name="Sorokin A."/>
            <person name="Tacconi E."/>
            <person name="Takagi T."/>
            <person name="Takahashi H."/>
            <person name="Takemaru K."/>
            <person name="Takeuchi M."/>
            <person name="Tamakoshi A."/>
            <person name="Tanaka T."/>
            <person name="Terpstra P."/>
            <person name="Tognoni A."/>
            <person name="Tosato V."/>
            <person name="Uchiyama S."/>
            <person name="Vandenbol M."/>
            <person name="Vannier F."/>
            <person name="Vassarotti A."/>
            <person name="Viari A."/>
            <person name="Wambutt R."/>
            <person name="Wedler E."/>
            <person name="Wedler H."/>
            <person name="Weitzenegger T."/>
            <person name="Winters P."/>
            <person name="Wipat A."/>
            <person name="Yamamoto H."/>
            <person name="Yamane K."/>
            <person name="Yasumoto K."/>
            <person name="Yata K."/>
            <person name="Yoshida K."/>
            <person name="Yoshikawa H.-F."/>
            <person name="Zumstein E."/>
            <person name="Yoshikawa H."/>
            <person name="Danchin A."/>
        </authorList>
    </citation>
    <scope>NUCLEOTIDE SEQUENCE [LARGE SCALE GENOMIC DNA]</scope>
    <source>
        <strain>168</strain>
    </source>
</reference>
<reference key="3">
    <citation type="journal article" date="2009" name="Microbiology">
        <title>From a consortium sequence to a unified sequence: the Bacillus subtilis 168 reference genome a decade later.</title>
        <authorList>
            <person name="Barbe V."/>
            <person name="Cruveiller S."/>
            <person name="Kunst F."/>
            <person name="Lenoble P."/>
            <person name="Meurice G."/>
            <person name="Sekowska A."/>
            <person name="Vallenet D."/>
            <person name="Wang T."/>
            <person name="Moszer I."/>
            <person name="Medigue C."/>
            <person name="Danchin A."/>
        </authorList>
    </citation>
    <scope>SEQUENCE REVISION TO N-TERMINUS</scope>
</reference>
<organism>
    <name type="scientific">Bacillus subtilis (strain 168)</name>
    <dbReference type="NCBI Taxonomy" id="224308"/>
    <lineage>
        <taxon>Bacteria</taxon>
        <taxon>Bacillati</taxon>
        <taxon>Bacillota</taxon>
        <taxon>Bacilli</taxon>
        <taxon>Bacillales</taxon>
        <taxon>Bacillaceae</taxon>
        <taxon>Bacillus</taxon>
    </lineage>
</organism>
<keyword id="KW-1003">Cell membrane</keyword>
<keyword id="KW-0472">Membrane</keyword>
<keyword id="KW-1185">Reference proteome</keyword>
<keyword id="KW-0812">Transmembrane</keyword>
<keyword id="KW-1133">Transmembrane helix</keyword>